<comment type="function">
    <text evidence="2">Regulates the earliest stages of development of the anterior neural plate. Plays a role in forebrain development by inhibiting the expression of otx2 and pax6 in the rostral region of the anterior neural plate. Necessary for both neural differentiation and neural patterning. Controls Spemann organizer development. May act as a transcriptional repressor (By similarity).</text>
</comment>
<comment type="subunit">
    <text evidence="1">Interacts (via N-terminus) with zyx.</text>
</comment>
<comment type="subcellular location">
    <subcellularLocation>
        <location evidence="2 4">Nucleus</location>
    </subcellularLocation>
    <text evidence="2">Enters the cytoplasm in the presence of zyx.</text>
</comment>
<comment type="similarity">
    <text evidence="3">Belongs to the ANF homeobox family.</text>
</comment>
<protein>
    <recommendedName>
        <fullName>Homeobox expressed in ES cells 1</fullName>
    </recommendedName>
    <alternativeName>
        <fullName>Homeobox protein ANF-1</fullName>
    </alternativeName>
</protein>
<gene>
    <name evidence="6" type="primary">hesx1</name>
    <name type="ORF">TNeu069m07.1</name>
</gene>
<proteinExistence type="evidence at transcript level"/>
<keyword id="KW-0217">Developmental protein</keyword>
<keyword id="KW-0238">DNA-binding</keyword>
<keyword id="KW-0371">Homeobox</keyword>
<keyword id="KW-0539">Nucleus</keyword>
<keyword id="KW-1185">Reference proteome</keyword>
<sequence length="186" mass="21688">MSPGLQKGSRLMENRSPPSSFSIEHILGLDKKTEVASSPIIKHHRPWIQCNSEGVDGTFWHIPVISCDLPVQVHALRRSMGEETQVRLEKCCGEEDRLTYKRELSWYRGRRPRTAFTRSQIEILENVFRVNSYPGIDIREELAGKLALDEDRIQIWFQNRRAKLKRSHRESQFLMVKDSLSSKIQE</sequence>
<organism>
    <name type="scientific">Xenopus tropicalis</name>
    <name type="common">Western clawed frog</name>
    <name type="synonym">Silurana tropicalis</name>
    <dbReference type="NCBI Taxonomy" id="8364"/>
    <lineage>
        <taxon>Eukaryota</taxon>
        <taxon>Metazoa</taxon>
        <taxon>Chordata</taxon>
        <taxon>Craniata</taxon>
        <taxon>Vertebrata</taxon>
        <taxon>Euteleostomi</taxon>
        <taxon>Amphibia</taxon>
        <taxon>Batrachia</taxon>
        <taxon>Anura</taxon>
        <taxon>Pipoidea</taxon>
        <taxon>Pipidae</taxon>
        <taxon>Xenopodinae</taxon>
        <taxon>Xenopus</taxon>
        <taxon>Silurana</taxon>
    </lineage>
</organism>
<accession>Q28J15</accession>
<evidence type="ECO:0000250" key="1"/>
<evidence type="ECO:0000250" key="2">
    <source>
        <dbReference type="UniProtKB" id="Q91898"/>
    </source>
</evidence>
<evidence type="ECO:0000255" key="3"/>
<evidence type="ECO:0000255" key="4">
    <source>
        <dbReference type="PROSITE-ProRule" id="PRU00108"/>
    </source>
</evidence>
<evidence type="ECO:0000312" key="5">
    <source>
        <dbReference type="EMBL" id="AAI59021.1"/>
    </source>
</evidence>
<evidence type="ECO:0000312" key="6">
    <source>
        <dbReference type="EMBL" id="CAJ82725.1"/>
    </source>
</evidence>
<reference evidence="6" key="1">
    <citation type="submission" date="2006-10" db="EMBL/GenBank/DDBJ databases">
        <authorList>
            <consortium name="Sanger Xenopus tropicalis EST/cDNA project"/>
        </authorList>
    </citation>
    <scope>NUCLEOTIDE SEQUENCE [LARGE SCALE MRNA]</scope>
    <source>
        <tissue evidence="6">Neurula</tissue>
    </source>
</reference>
<reference evidence="6" key="2">
    <citation type="submission" date="2008-02" db="EMBL/GenBank/DDBJ databases">
        <authorList>
            <consortium name="NIH - Xenopus Gene Collection (XGC) project"/>
        </authorList>
    </citation>
    <scope>NUCLEOTIDE SEQUENCE [LARGE SCALE MRNA]</scope>
    <source>
        <tissue evidence="5">Gastrula</tissue>
    </source>
</reference>
<name>HESX1_XENTR</name>
<dbReference type="EMBL" id="CR760108">
    <property type="protein sequence ID" value="CAJ82725.1"/>
    <property type="molecule type" value="mRNA"/>
</dbReference>
<dbReference type="EMBL" id="BC159020">
    <property type="protein sequence ID" value="AAI59021.1"/>
    <property type="molecule type" value="mRNA"/>
</dbReference>
<dbReference type="RefSeq" id="NP_001016712.1">
    <property type="nucleotide sequence ID" value="NM_001016712.2"/>
</dbReference>
<dbReference type="SMR" id="Q28J15"/>
<dbReference type="FunCoup" id="Q28J15">
    <property type="interactions" value="1099"/>
</dbReference>
<dbReference type="STRING" id="8364.ENSXETP00000001006"/>
<dbReference type="PaxDb" id="8364-ENSXETP00000019070"/>
<dbReference type="GeneID" id="549466"/>
<dbReference type="KEGG" id="xtr:549466"/>
<dbReference type="AGR" id="Xenbase:XB-GENE-483193"/>
<dbReference type="CTD" id="8820"/>
<dbReference type="Xenbase" id="XB-GENE-483193">
    <property type="gene designation" value="hesx1"/>
</dbReference>
<dbReference type="eggNOG" id="KOG0490">
    <property type="taxonomic scope" value="Eukaryota"/>
</dbReference>
<dbReference type="HOGENOM" id="CLU_125528_0_0_1"/>
<dbReference type="InParanoid" id="Q28J15"/>
<dbReference type="OMA" id="SHRESHF"/>
<dbReference type="OrthoDB" id="6159439at2759"/>
<dbReference type="PhylomeDB" id="Q28J15"/>
<dbReference type="Proteomes" id="UP000008143">
    <property type="component" value="Chromosome 4"/>
</dbReference>
<dbReference type="Bgee" id="ENSXETG00000008710">
    <property type="expression patterns" value="Expressed in immature eye and 8 other cell types or tissues"/>
</dbReference>
<dbReference type="GO" id="GO:0005634">
    <property type="term" value="C:nucleus"/>
    <property type="evidence" value="ECO:0000250"/>
    <property type="project" value="UniProtKB"/>
</dbReference>
<dbReference type="GO" id="GO:0003677">
    <property type="term" value="F:DNA binding"/>
    <property type="evidence" value="ECO:0007669"/>
    <property type="project" value="UniProtKB-KW"/>
</dbReference>
<dbReference type="GO" id="GO:0000981">
    <property type="term" value="F:DNA-binding transcription factor activity, RNA polymerase II-specific"/>
    <property type="evidence" value="ECO:0007669"/>
    <property type="project" value="InterPro"/>
</dbReference>
<dbReference type="GO" id="GO:0030900">
    <property type="term" value="P:forebrain development"/>
    <property type="evidence" value="ECO:0000250"/>
    <property type="project" value="UniProtKB"/>
</dbReference>
<dbReference type="GO" id="GO:0045892">
    <property type="term" value="P:negative regulation of DNA-templated transcription"/>
    <property type="evidence" value="ECO:0000250"/>
    <property type="project" value="UniProtKB"/>
</dbReference>
<dbReference type="GO" id="GO:0000122">
    <property type="term" value="P:negative regulation of transcription by RNA polymerase II"/>
    <property type="evidence" value="ECO:0000250"/>
    <property type="project" value="UniProtKB"/>
</dbReference>
<dbReference type="GO" id="GO:0045664">
    <property type="term" value="P:regulation of neuron differentiation"/>
    <property type="evidence" value="ECO:0000250"/>
    <property type="project" value="UniProtKB"/>
</dbReference>
<dbReference type="GO" id="GO:0060061">
    <property type="term" value="P:Spemann organizer formation"/>
    <property type="evidence" value="ECO:0000250"/>
    <property type="project" value="UniProtKB"/>
</dbReference>
<dbReference type="CDD" id="cd00086">
    <property type="entry name" value="homeodomain"/>
    <property type="match status" value="1"/>
</dbReference>
<dbReference type="FunFam" id="1.10.10.60:FF:000214">
    <property type="entry name" value="Homeobox expressed in ES cells 1"/>
    <property type="match status" value="1"/>
</dbReference>
<dbReference type="Gene3D" id="1.10.10.60">
    <property type="entry name" value="Homeodomain-like"/>
    <property type="match status" value="1"/>
</dbReference>
<dbReference type="InterPro" id="IPR001356">
    <property type="entry name" value="HD"/>
</dbReference>
<dbReference type="InterPro" id="IPR043402">
    <property type="entry name" value="Hesx1"/>
</dbReference>
<dbReference type="InterPro" id="IPR017970">
    <property type="entry name" value="Homeobox_CS"/>
</dbReference>
<dbReference type="InterPro" id="IPR009057">
    <property type="entry name" value="Homeodomain-like_sf"/>
</dbReference>
<dbReference type="PANTHER" id="PTHR46966">
    <property type="entry name" value="HOMEOBOX EXPRESSED IN ES CELLS 1"/>
    <property type="match status" value="1"/>
</dbReference>
<dbReference type="PANTHER" id="PTHR46966:SF1">
    <property type="entry name" value="HOMEOBOX EXPRESSED IN ES CELLS 1"/>
    <property type="match status" value="1"/>
</dbReference>
<dbReference type="Pfam" id="PF00046">
    <property type="entry name" value="Homeodomain"/>
    <property type="match status" value="1"/>
</dbReference>
<dbReference type="SMART" id="SM00389">
    <property type="entry name" value="HOX"/>
    <property type="match status" value="1"/>
</dbReference>
<dbReference type="SUPFAM" id="SSF46689">
    <property type="entry name" value="Homeodomain-like"/>
    <property type="match status" value="1"/>
</dbReference>
<dbReference type="PROSITE" id="PS00027">
    <property type="entry name" value="HOMEOBOX_1"/>
    <property type="match status" value="1"/>
</dbReference>
<dbReference type="PROSITE" id="PS50071">
    <property type="entry name" value="HOMEOBOX_2"/>
    <property type="match status" value="1"/>
</dbReference>
<feature type="chain" id="PRO_0000331486" description="Homeobox expressed in ES cells 1">
    <location>
        <begin position="1"/>
        <end position="186"/>
    </location>
</feature>
<feature type="DNA-binding region" description="Homeobox" evidence="4">
    <location>
        <begin position="109"/>
        <end position="168"/>
    </location>
</feature>